<keyword id="KW-1003">Cell membrane</keyword>
<keyword id="KW-1015">Disulfide bond</keyword>
<keyword id="KW-0297">G-protein coupled receptor</keyword>
<keyword id="KW-0472">Membrane</keyword>
<keyword id="KW-0675">Receptor</keyword>
<keyword id="KW-1185">Reference proteome</keyword>
<keyword id="KW-0807">Transducer</keyword>
<keyword id="KW-0812">Transmembrane</keyword>
<keyword id="KW-1133">Transmembrane helix</keyword>
<protein>
    <recommendedName>
        <fullName>Putative gustatory receptor clone PTE38</fullName>
    </recommendedName>
</protein>
<feature type="chain" id="PRO_0000069669" description="Putative gustatory receptor clone PTE38">
    <location>
        <begin position="1" status="less than"/>
        <end position="234" status="greater than"/>
    </location>
</feature>
<feature type="transmembrane region" description="Helical; Name=2" evidence="1">
    <location>
        <begin position="1" status="less than"/>
        <end position="11"/>
    </location>
</feature>
<feature type="topological domain" description="Extracellular" evidence="1">
    <location>
        <begin position="12"/>
        <end position="42"/>
    </location>
</feature>
<feature type="transmembrane region" description="Helical; Name=3" evidence="1">
    <location>
        <begin position="43"/>
        <end position="62"/>
    </location>
</feature>
<feature type="topological domain" description="Cytoplasmic" evidence="1">
    <location>
        <begin position="63"/>
        <end position="84"/>
    </location>
</feature>
<feature type="transmembrane region" description="Helical; Name=4" evidence="1">
    <location>
        <begin position="85"/>
        <end position="105"/>
    </location>
</feature>
<feature type="topological domain" description="Extracellular" evidence="1">
    <location>
        <begin position="106"/>
        <end position="138"/>
    </location>
</feature>
<feature type="transmembrane region" description="Helical; Name=5" evidence="1">
    <location>
        <begin position="139"/>
        <end position="160"/>
    </location>
</feature>
<feature type="topological domain" description="Cytoplasmic" evidence="1">
    <location>
        <begin position="161"/>
        <end position="182"/>
    </location>
</feature>
<feature type="transmembrane region" description="Helical; Name=6" evidence="1">
    <location>
        <begin position="183"/>
        <end position="202"/>
    </location>
</feature>
<feature type="topological domain" description="Extracellular" evidence="1">
    <location>
        <begin position="203"/>
        <end position="212"/>
    </location>
</feature>
<feature type="transmembrane region" description="Helical; Name=7" evidence="1">
    <location>
        <begin position="213"/>
        <end position="234"/>
    </location>
</feature>
<feature type="disulfide bond" evidence="2">
    <location>
        <begin position="39"/>
        <end position="121"/>
    </location>
</feature>
<feature type="non-terminal residue">
    <location>
        <position position="1"/>
    </location>
</feature>
<feature type="non-terminal residue">
    <location>
        <position position="234"/>
    </location>
</feature>
<evidence type="ECO:0000255" key="1"/>
<evidence type="ECO:0000255" key="2">
    <source>
        <dbReference type="PROSITE-ProRule" id="PRU00521"/>
    </source>
</evidence>
<accession>P35897</accession>
<name>GU38_RAT</name>
<dbReference type="PIR" id="S28999">
    <property type="entry name" value="S28999"/>
</dbReference>
<dbReference type="SMR" id="P35897"/>
<dbReference type="STRING" id="10116.ENSRNOP00000048285"/>
<dbReference type="AGR" id="RGD:1333665"/>
<dbReference type="InParanoid" id="P35897"/>
<dbReference type="Proteomes" id="UP000002494">
    <property type="component" value="Unplaced"/>
</dbReference>
<dbReference type="GO" id="GO:0005886">
    <property type="term" value="C:plasma membrane"/>
    <property type="evidence" value="ECO:0000318"/>
    <property type="project" value="GO_Central"/>
</dbReference>
<dbReference type="GO" id="GO:0004930">
    <property type="term" value="F:G protein-coupled receptor activity"/>
    <property type="evidence" value="ECO:0007669"/>
    <property type="project" value="UniProtKB-KW"/>
</dbReference>
<dbReference type="GO" id="GO:0004984">
    <property type="term" value="F:olfactory receptor activity"/>
    <property type="evidence" value="ECO:0000318"/>
    <property type="project" value="GO_Central"/>
</dbReference>
<dbReference type="GO" id="GO:0007165">
    <property type="term" value="P:signal transduction"/>
    <property type="evidence" value="ECO:0000318"/>
    <property type="project" value="GO_Central"/>
</dbReference>
<dbReference type="FunFam" id="1.20.1070.10:FF:000015">
    <property type="entry name" value="Olfactory receptor"/>
    <property type="match status" value="1"/>
</dbReference>
<dbReference type="Gene3D" id="1.20.1070.10">
    <property type="entry name" value="Rhodopsin 7-helix transmembrane proteins"/>
    <property type="match status" value="1"/>
</dbReference>
<dbReference type="InterPro" id="IPR000276">
    <property type="entry name" value="GPCR_Rhodpsn"/>
</dbReference>
<dbReference type="InterPro" id="IPR017452">
    <property type="entry name" value="GPCR_Rhodpsn_7TM"/>
</dbReference>
<dbReference type="InterPro" id="IPR000725">
    <property type="entry name" value="Olfact_rcpt"/>
</dbReference>
<dbReference type="PANTHER" id="PTHR48001">
    <property type="entry name" value="OLFACTORY RECEPTOR"/>
    <property type="match status" value="1"/>
</dbReference>
<dbReference type="Pfam" id="PF13853">
    <property type="entry name" value="7tm_4"/>
    <property type="match status" value="1"/>
</dbReference>
<dbReference type="PRINTS" id="PR00245">
    <property type="entry name" value="OLFACTORYR"/>
</dbReference>
<dbReference type="SUPFAM" id="SSF81321">
    <property type="entry name" value="Family A G protein-coupled receptor-like"/>
    <property type="match status" value="1"/>
</dbReference>
<dbReference type="PROSITE" id="PS00237">
    <property type="entry name" value="G_PROTEIN_RECEP_F1_1"/>
    <property type="match status" value="1"/>
</dbReference>
<dbReference type="PROSITE" id="PS50262">
    <property type="entry name" value="G_PROTEIN_RECEP_F1_2"/>
    <property type="match status" value="1"/>
</dbReference>
<organism>
    <name type="scientific">Rattus norvegicus</name>
    <name type="common">Rat</name>
    <dbReference type="NCBI Taxonomy" id="10116"/>
    <lineage>
        <taxon>Eukaryota</taxon>
        <taxon>Metazoa</taxon>
        <taxon>Chordata</taxon>
        <taxon>Craniata</taxon>
        <taxon>Vertebrata</taxon>
        <taxon>Euteleostomi</taxon>
        <taxon>Mammalia</taxon>
        <taxon>Eutheria</taxon>
        <taxon>Euarchontoglires</taxon>
        <taxon>Glires</taxon>
        <taxon>Rodentia</taxon>
        <taxon>Myomorpha</taxon>
        <taxon>Muroidea</taxon>
        <taxon>Muridae</taxon>
        <taxon>Murinae</taxon>
        <taxon>Rattus</taxon>
    </lineage>
</organism>
<proteinExistence type="evidence at transcript level"/>
<reference key="1">
    <citation type="journal article" date="1993" name="FEBS Lett.">
        <title>Multiple genes for G protein-coupled receptors and their expression in lingual epithelia.</title>
        <authorList>
            <person name="Abe K."/>
            <person name="Kusakabe Y."/>
            <person name="Tanemura K."/>
            <person name="Emori Y."/>
            <person name="Arai S."/>
        </authorList>
    </citation>
    <scope>NUCLEOTIDE SEQUENCE</scope>
    <source>
        <strain>Fischer</strain>
        <tissue>Tongue epithelium</tissue>
    </source>
</reference>
<comment type="function">
    <text>Possible taste receptor.</text>
</comment>
<comment type="subcellular location">
    <subcellularLocation>
        <location>Cell membrane</location>
        <topology>Multi-pass membrane protein</topology>
    </subcellularLocation>
</comment>
<comment type="tissue specificity">
    <text>Tongue specific.</text>
</comment>
<comment type="similarity">
    <text evidence="2">Belongs to the G-protein coupled receptor 1 family.</text>
</comment>
<sequence>MYLFFSNLSFNDICIITTTIPKMLMNVQSHDQSITYLGCLSQVYLIVNFGSIESCLLAVMAYDRYVAICHPLKYTVIMNHYFCVMLLLFACSLALHMCLFHILMVLILTFCTKTEIPHFFCELAHIIKLTCSDNFINYLLIYTVSVLFFGVHIVGIILSYIYTVSSVLRMSLLGGMYKAFSTCGSHLSVVSLFYGTGFGVHISSPLTDSPRKTVVASVMYTVVTQMHGPFIYSL</sequence>